<proteinExistence type="evidence at protein level"/>
<gene>
    <name type="primary">fkbP</name>
</gene>
<organism>
    <name type="scientific">Streptomyces anulatus</name>
    <name type="common">Streptomyces chrysomallus</name>
    <dbReference type="NCBI Taxonomy" id="1892"/>
    <lineage>
        <taxon>Bacteria</taxon>
        <taxon>Bacillati</taxon>
        <taxon>Actinomycetota</taxon>
        <taxon>Actinomycetes</taxon>
        <taxon>Kitasatosporales</taxon>
        <taxon>Streptomycetaceae</taxon>
        <taxon>Streptomyces</taxon>
    </lineage>
</organism>
<accession>P28725</accession>
<comment type="function">
    <text>PPIases accelerate the folding of proteins.</text>
</comment>
<comment type="catalytic activity">
    <reaction>
        <text>[protein]-peptidylproline (omega=180) = [protein]-peptidylproline (omega=0)</text>
        <dbReference type="Rhea" id="RHEA:16237"/>
        <dbReference type="Rhea" id="RHEA-COMP:10747"/>
        <dbReference type="Rhea" id="RHEA-COMP:10748"/>
        <dbReference type="ChEBI" id="CHEBI:83833"/>
        <dbReference type="ChEBI" id="CHEBI:83834"/>
        <dbReference type="EC" id="5.2.1.8"/>
    </reaction>
</comment>
<comment type="activity regulation">
    <text>Inhibited by FK506, ascomycin and rapamycin.</text>
</comment>
<comment type="similarity">
    <text evidence="2">Belongs to the FKBP-type PPIase family.</text>
</comment>
<feature type="chain" id="PRO_0000075354" description="FK506-binding protein">
    <location>
        <begin position="1"/>
        <end position="124"/>
    </location>
</feature>
<feature type="domain" description="PPIase FKBP-type" evidence="1">
    <location>
        <begin position="35"/>
        <end position="124"/>
    </location>
</feature>
<keyword id="KW-0903">Direct protein sequencing</keyword>
<keyword id="KW-0413">Isomerase</keyword>
<keyword id="KW-0697">Rotamase</keyword>
<name>FKBP_STRAQ</name>
<protein>
    <recommendedName>
        <fullName>FK506-binding protein</fullName>
        <ecNumber>5.2.1.8</ecNumber>
    </recommendedName>
    <alternativeName>
        <fullName>Peptidyl-prolyl cis-trans isomerase</fullName>
        <shortName>PPIase</shortName>
    </alternativeName>
    <alternativeName>
        <fullName>Rotamase</fullName>
    </alternativeName>
</protein>
<dbReference type="EC" id="5.2.1.8"/>
<dbReference type="EMBL" id="M98428">
    <property type="protein sequence ID" value="AAA26745.1"/>
    <property type="molecule type" value="Genomic_DNA"/>
</dbReference>
<dbReference type="PIR" id="A43328">
    <property type="entry name" value="A43328"/>
</dbReference>
<dbReference type="RefSeq" id="WP_050359483.1">
    <property type="nucleotide sequence ID" value="NZ_JBICWO010000015.1"/>
</dbReference>
<dbReference type="SMR" id="P28725"/>
<dbReference type="GO" id="GO:0003755">
    <property type="term" value="F:peptidyl-prolyl cis-trans isomerase activity"/>
    <property type="evidence" value="ECO:0007669"/>
    <property type="project" value="UniProtKB-KW"/>
</dbReference>
<dbReference type="FunFam" id="3.10.50.40:FF:000006">
    <property type="entry name" value="Peptidyl-prolyl cis-trans isomerase"/>
    <property type="match status" value="1"/>
</dbReference>
<dbReference type="Gene3D" id="3.10.50.40">
    <property type="match status" value="1"/>
</dbReference>
<dbReference type="InterPro" id="IPR046357">
    <property type="entry name" value="PPIase_dom_sf"/>
</dbReference>
<dbReference type="InterPro" id="IPR001179">
    <property type="entry name" value="PPIase_FKBP_dom"/>
</dbReference>
<dbReference type="PANTHER" id="PTHR43811:SF19">
    <property type="entry name" value="39 KDA FK506-BINDING NUCLEAR PROTEIN"/>
    <property type="match status" value="1"/>
</dbReference>
<dbReference type="PANTHER" id="PTHR43811">
    <property type="entry name" value="FKBP-TYPE PEPTIDYL-PROLYL CIS-TRANS ISOMERASE FKPA"/>
    <property type="match status" value="1"/>
</dbReference>
<dbReference type="Pfam" id="PF00254">
    <property type="entry name" value="FKBP_C"/>
    <property type="match status" value="1"/>
</dbReference>
<dbReference type="SUPFAM" id="SSF54534">
    <property type="entry name" value="FKBP-like"/>
    <property type="match status" value="1"/>
</dbReference>
<dbReference type="PROSITE" id="PS50059">
    <property type="entry name" value="FKBP_PPIASE"/>
    <property type="match status" value="1"/>
</dbReference>
<sequence>MSIEKPEVDFPGGEPPADLAIKDIWEGDGPVAQAGQTVSVHYVGVAFSTGEEFDASWNRGTPLQFQLGAGQVISGWDQGVQGMKVGGRRELIIPAHLAYGDRGAGGGKIAPGETLIFVCDLVAV</sequence>
<evidence type="ECO:0000255" key="1">
    <source>
        <dbReference type="PROSITE-ProRule" id="PRU00277"/>
    </source>
</evidence>
<evidence type="ECO:0000305" key="2"/>
<reference key="1">
    <citation type="journal article" date="1992" name="J. Bacteriol.">
        <title>FK-506-binding proteins from streptomycetes producing immunosuppressive macrolactones of the FK-506 type.</title>
        <authorList>
            <person name="Pahl A."/>
            <person name="Keller U."/>
        </authorList>
    </citation>
    <scope>NUCLEOTIDE SEQUENCE [GENOMIC DNA]</scope>
    <scope>PROTEIN SEQUENCE OF 1-36</scope>
    <source>
        <strain>ATCC 11523 / DSM 40128 / JCM 4296 / LMG 20459 / NBRC 15393</strain>
    </source>
</reference>